<comment type="function">
    <text evidence="1">Catalyzes the conversion of glucosamine-6-phosphate to glucosamine-1-phosphate.</text>
</comment>
<comment type="catalytic activity">
    <reaction evidence="1">
        <text>alpha-D-glucosamine 1-phosphate = D-glucosamine 6-phosphate</text>
        <dbReference type="Rhea" id="RHEA:23424"/>
        <dbReference type="ChEBI" id="CHEBI:58516"/>
        <dbReference type="ChEBI" id="CHEBI:58725"/>
        <dbReference type="EC" id="5.4.2.10"/>
    </reaction>
</comment>
<comment type="cofactor">
    <cofactor evidence="1">
        <name>Mg(2+)</name>
        <dbReference type="ChEBI" id="CHEBI:18420"/>
    </cofactor>
    <text evidence="1">Binds 1 Mg(2+) ion per subunit.</text>
</comment>
<comment type="PTM">
    <text evidence="1">Activated by phosphorylation.</text>
</comment>
<comment type="similarity">
    <text evidence="1">Belongs to the phosphohexose mutase family.</text>
</comment>
<protein>
    <recommendedName>
        <fullName evidence="1">Phosphoglucosamine mutase</fullName>
        <ecNumber evidence="1">5.4.2.10</ecNumber>
    </recommendedName>
</protein>
<organism>
    <name type="scientific">Bacillus cereus (strain ATCC 10987 / NRS 248)</name>
    <dbReference type="NCBI Taxonomy" id="222523"/>
    <lineage>
        <taxon>Bacteria</taxon>
        <taxon>Bacillati</taxon>
        <taxon>Bacillota</taxon>
        <taxon>Bacilli</taxon>
        <taxon>Bacillales</taxon>
        <taxon>Bacillaceae</taxon>
        <taxon>Bacillus</taxon>
        <taxon>Bacillus cereus group</taxon>
    </lineage>
</organism>
<evidence type="ECO:0000255" key="1">
    <source>
        <dbReference type="HAMAP-Rule" id="MF_01554"/>
    </source>
</evidence>
<proteinExistence type="inferred from homology"/>
<sequence length="448" mass="48417">MGKYFGTDGVRGVANQELTPELAFKIGRFGGYVLTKDTDRPKVIIGRDTRISGHMLEGALVAGLLSTGAEVMRLGVISTPGVAYLTKALDAQAGVMISASHNPVQDNGIKFFGSDGFKLTDEQEAEIEALLDKEVDELPRPTGTNLGQVSDYFEGGQKYLQYIKQTVEEDFSGLHIALDCAHGATSSLAPYLFADLEADISTMGTSPNGMNINDGVGSTHPEVLAELVKEKGADIGLAFDGDGDRLIAVDEKGNIVDGDQIMFICAKYMKETGQLKHNTVVSTVMSNLGFYKALEANGITSDKTAVGDRYVMEEMKRGGYNLGGEQSGHIILLDYITTGDGMLSALQLVNIMKMTKKPLSELAGEMTKFPQLLVNVRVTDKKLALENEKIKEIIRVVEEEMNGDGRILVRPSGTEPLIRVMAEAPTQEVCDAYVHRIVEVVKAEVGAE</sequence>
<reference key="1">
    <citation type="journal article" date="2004" name="Nucleic Acids Res.">
        <title>The genome sequence of Bacillus cereus ATCC 10987 reveals metabolic adaptations and a large plasmid related to Bacillus anthracis pXO1.</title>
        <authorList>
            <person name="Rasko D.A."/>
            <person name="Ravel J."/>
            <person name="Oekstad O.A."/>
            <person name="Helgason E."/>
            <person name="Cer R.Z."/>
            <person name="Jiang L."/>
            <person name="Shores K.A."/>
            <person name="Fouts D.E."/>
            <person name="Tourasse N.J."/>
            <person name="Angiuoli S.V."/>
            <person name="Kolonay J.F."/>
            <person name="Nelson W.C."/>
            <person name="Kolstoe A.-B."/>
            <person name="Fraser C.M."/>
            <person name="Read T.D."/>
        </authorList>
    </citation>
    <scope>NUCLEOTIDE SEQUENCE [LARGE SCALE GENOMIC DNA]</scope>
    <source>
        <strain>ATCC 10987 / NRS 248</strain>
    </source>
</reference>
<name>GLMM_BACC1</name>
<dbReference type="EC" id="5.4.2.10" evidence="1"/>
<dbReference type="EMBL" id="AE017194">
    <property type="protein sequence ID" value="AAS39093.1"/>
    <property type="molecule type" value="Genomic_DNA"/>
</dbReference>
<dbReference type="SMR" id="Q73F50"/>
<dbReference type="KEGG" id="bca:BCE_0157"/>
<dbReference type="HOGENOM" id="CLU_016950_7_0_9"/>
<dbReference type="Proteomes" id="UP000002527">
    <property type="component" value="Chromosome"/>
</dbReference>
<dbReference type="GO" id="GO:0005829">
    <property type="term" value="C:cytosol"/>
    <property type="evidence" value="ECO:0007669"/>
    <property type="project" value="TreeGrafter"/>
</dbReference>
<dbReference type="GO" id="GO:0000287">
    <property type="term" value="F:magnesium ion binding"/>
    <property type="evidence" value="ECO:0007669"/>
    <property type="project" value="UniProtKB-UniRule"/>
</dbReference>
<dbReference type="GO" id="GO:0008966">
    <property type="term" value="F:phosphoglucosamine mutase activity"/>
    <property type="evidence" value="ECO:0007669"/>
    <property type="project" value="UniProtKB-UniRule"/>
</dbReference>
<dbReference type="GO" id="GO:0004615">
    <property type="term" value="F:phosphomannomutase activity"/>
    <property type="evidence" value="ECO:0007669"/>
    <property type="project" value="TreeGrafter"/>
</dbReference>
<dbReference type="GO" id="GO:0005975">
    <property type="term" value="P:carbohydrate metabolic process"/>
    <property type="evidence" value="ECO:0007669"/>
    <property type="project" value="InterPro"/>
</dbReference>
<dbReference type="GO" id="GO:0009252">
    <property type="term" value="P:peptidoglycan biosynthetic process"/>
    <property type="evidence" value="ECO:0007669"/>
    <property type="project" value="TreeGrafter"/>
</dbReference>
<dbReference type="GO" id="GO:0006048">
    <property type="term" value="P:UDP-N-acetylglucosamine biosynthetic process"/>
    <property type="evidence" value="ECO:0007669"/>
    <property type="project" value="TreeGrafter"/>
</dbReference>
<dbReference type="CDD" id="cd05802">
    <property type="entry name" value="GlmM"/>
    <property type="match status" value="1"/>
</dbReference>
<dbReference type="FunFam" id="3.30.310.50:FF:000001">
    <property type="entry name" value="Phosphoglucosamine mutase"/>
    <property type="match status" value="1"/>
</dbReference>
<dbReference type="FunFam" id="3.40.120.10:FF:000001">
    <property type="entry name" value="Phosphoglucosamine mutase"/>
    <property type="match status" value="1"/>
</dbReference>
<dbReference type="FunFam" id="3.40.120.10:FF:000002">
    <property type="entry name" value="Phosphoglucosamine mutase"/>
    <property type="match status" value="1"/>
</dbReference>
<dbReference type="Gene3D" id="3.40.120.10">
    <property type="entry name" value="Alpha-D-Glucose-1,6-Bisphosphate, subunit A, domain 3"/>
    <property type="match status" value="3"/>
</dbReference>
<dbReference type="Gene3D" id="3.30.310.50">
    <property type="entry name" value="Alpha-D-phosphohexomutase, C-terminal domain"/>
    <property type="match status" value="1"/>
</dbReference>
<dbReference type="HAMAP" id="MF_01554_B">
    <property type="entry name" value="GlmM_B"/>
    <property type="match status" value="1"/>
</dbReference>
<dbReference type="InterPro" id="IPR005844">
    <property type="entry name" value="A-D-PHexomutase_a/b/a-I"/>
</dbReference>
<dbReference type="InterPro" id="IPR016055">
    <property type="entry name" value="A-D-PHexomutase_a/b/a-I/II/III"/>
</dbReference>
<dbReference type="InterPro" id="IPR005845">
    <property type="entry name" value="A-D-PHexomutase_a/b/a-II"/>
</dbReference>
<dbReference type="InterPro" id="IPR005846">
    <property type="entry name" value="A-D-PHexomutase_a/b/a-III"/>
</dbReference>
<dbReference type="InterPro" id="IPR005843">
    <property type="entry name" value="A-D-PHexomutase_C"/>
</dbReference>
<dbReference type="InterPro" id="IPR036900">
    <property type="entry name" value="A-D-PHexomutase_C_sf"/>
</dbReference>
<dbReference type="InterPro" id="IPR016066">
    <property type="entry name" value="A-D-PHexomutase_CS"/>
</dbReference>
<dbReference type="InterPro" id="IPR005841">
    <property type="entry name" value="Alpha-D-phosphohexomutase_SF"/>
</dbReference>
<dbReference type="InterPro" id="IPR006352">
    <property type="entry name" value="GlmM_bact"/>
</dbReference>
<dbReference type="InterPro" id="IPR050060">
    <property type="entry name" value="Phosphoglucosamine_mutase"/>
</dbReference>
<dbReference type="NCBIfam" id="TIGR01455">
    <property type="entry name" value="glmM"/>
    <property type="match status" value="1"/>
</dbReference>
<dbReference type="NCBIfam" id="NF008139">
    <property type="entry name" value="PRK10887.1"/>
    <property type="match status" value="1"/>
</dbReference>
<dbReference type="PANTHER" id="PTHR42946:SF1">
    <property type="entry name" value="PHOSPHOGLUCOMUTASE (ALPHA-D-GLUCOSE-1,6-BISPHOSPHATE-DEPENDENT)"/>
    <property type="match status" value="1"/>
</dbReference>
<dbReference type="PANTHER" id="PTHR42946">
    <property type="entry name" value="PHOSPHOHEXOSE MUTASE"/>
    <property type="match status" value="1"/>
</dbReference>
<dbReference type="Pfam" id="PF02878">
    <property type="entry name" value="PGM_PMM_I"/>
    <property type="match status" value="1"/>
</dbReference>
<dbReference type="Pfam" id="PF02879">
    <property type="entry name" value="PGM_PMM_II"/>
    <property type="match status" value="1"/>
</dbReference>
<dbReference type="Pfam" id="PF02880">
    <property type="entry name" value="PGM_PMM_III"/>
    <property type="match status" value="1"/>
</dbReference>
<dbReference type="Pfam" id="PF00408">
    <property type="entry name" value="PGM_PMM_IV"/>
    <property type="match status" value="1"/>
</dbReference>
<dbReference type="PRINTS" id="PR00509">
    <property type="entry name" value="PGMPMM"/>
</dbReference>
<dbReference type="SUPFAM" id="SSF55957">
    <property type="entry name" value="Phosphoglucomutase, C-terminal domain"/>
    <property type="match status" value="1"/>
</dbReference>
<dbReference type="SUPFAM" id="SSF53738">
    <property type="entry name" value="Phosphoglucomutase, first 3 domains"/>
    <property type="match status" value="3"/>
</dbReference>
<dbReference type="PROSITE" id="PS00710">
    <property type="entry name" value="PGM_PMM"/>
    <property type="match status" value="1"/>
</dbReference>
<gene>
    <name evidence="1" type="primary">glmM</name>
    <name type="ordered locus">BCE_0157</name>
</gene>
<feature type="chain" id="PRO_0000147840" description="Phosphoglucosamine mutase">
    <location>
        <begin position="1"/>
        <end position="448"/>
    </location>
</feature>
<feature type="active site" description="Phosphoserine intermediate" evidence="1">
    <location>
        <position position="100"/>
    </location>
</feature>
<feature type="binding site" description="via phosphate group" evidence="1">
    <location>
        <position position="100"/>
    </location>
    <ligand>
        <name>Mg(2+)</name>
        <dbReference type="ChEBI" id="CHEBI:18420"/>
    </ligand>
</feature>
<feature type="binding site" evidence="1">
    <location>
        <position position="240"/>
    </location>
    <ligand>
        <name>Mg(2+)</name>
        <dbReference type="ChEBI" id="CHEBI:18420"/>
    </ligand>
</feature>
<feature type="binding site" evidence="1">
    <location>
        <position position="242"/>
    </location>
    <ligand>
        <name>Mg(2+)</name>
        <dbReference type="ChEBI" id="CHEBI:18420"/>
    </ligand>
</feature>
<feature type="binding site" evidence="1">
    <location>
        <position position="244"/>
    </location>
    <ligand>
        <name>Mg(2+)</name>
        <dbReference type="ChEBI" id="CHEBI:18420"/>
    </ligand>
</feature>
<feature type="modified residue" description="Phosphoserine" evidence="1">
    <location>
        <position position="100"/>
    </location>
</feature>
<accession>Q73F50</accession>
<keyword id="KW-0413">Isomerase</keyword>
<keyword id="KW-0460">Magnesium</keyword>
<keyword id="KW-0479">Metal-binding</keyword>
<keyword id="KW-0597">Phosphoprotein</keyword>